<evidence type="ECO:0000255" key="1">
    <source>
        <dbReference type="HAMAP-Rule" id="MF_00111"/>
    </source>
</evidence>
<dbReference type="EC" id="2.5.1.7" evidence="1"/>
<dbReference type="EMBL" id="CP000783">
    <property type="protein sequence ID" value="ABU78793.1"/>
    <property type="molecule type" value="Genomic_DNA"/>
</dbReference>
<dbReference type="RefSeq" id="WP_004385080.1">
    <property type="nucleotide sequence ID" value="NC_009778.1"/>
</dbReference>
<dbReference type="SMR" id="A7MNS2"/>
<dbReference type="GeneID" id="56732239"/>
<dbReference type="KEGG" id="esa:ESA_03582"/>
<dbReference type="HOGENOM" id="CLU_027387_0_0_6"/>
<dbReference type="UniPathway" id="UPA00219"/>
<dbReference type="Proteomes" id="UP000000260">
    <property type="component" value="Chromosome"/>
</dbReference>
<dbReference type="GO" id="GO:0005737">
    <property type="term" value="C:cytoplasm"/>
    <property type="evidence" value="ECO:0007669"/>
    <property type="project" value="UniProtKB-SubCell"/>
</dbReference>
<dbReference type="GO" id="GO:0008760">
    <property type="term" value="F:UDP-N-acetylglucosamine 1-carboxyvinyltransferase activity"/>
    <property type="evidence" value="ECO:0007669"/>
    <property type="project" value="UniProtKB-UniRule"/>
</dbReference>
<dbReference type="GO" id="GO:0051301">
    <property type="term" value="P:cell division"/>
    <property type="evidence" value="ECO:0007669"/>
    <property type="project" value="UniProtKB-KW"/>
</dbReference>
<dbReference type="GO" id="GO:0071555">
    <property type="term" value="P:cell wall organization"/>
    <property type="evidence" value="ECO:0007669"/>
    <property type="project" value="UniProtKB-KW"/>
</dbReference>
<dbReference type="GO" id="GO:0009252">
    <property type="term" value="P:peptidoglycan biosynthetic process"/>
    <property type="evidence" value="ECO:0007669"/>
    <property type="project" value="UniProtKB-UniRule"/>
</dbReference>
<dbReference type="GO" id="GO:0008360">
    <property type="term" value="P:regulation of cell shape"/>
    <property type="evidence" value="ECO:0007669"/>
    <property type="project" value="UniProtKB-KW"/>
</dbReference>
<dbReference type="GO" id="GO:0019277">
    <property type="term" value="P:UDP-N-acetylgalactosamine biosynthetic process"/>
    <property type="evidence" value="ECO:0007669"/>
    <property type="project" value="InterPro"/>
</dbReference>
<dbReference type="CDD" id="cd01555">
    <property type="entry name" value="UdpNAET"/>
    <property type="match status" value="1"/>
</dbReference>
<dbReference type="FunFam" id="3.65.10.10:FF:000002">
    <property type="entry name" value="UDP-N-acetylglucosamine 1-carboxyvinyltransferase"/>
    <property type="match status" value="1"/>
</dbReference>
<dbReference type="Gene3D" id="3.65.10.10">
    <property type="entry name" value="Enolpyruvate transferase domain"/>
    <property type="match status" value="2"/>
</dbReference>
<dbReference type="HAMAP" id="MF_00111">
    <property type="entry name" value="MurA"/>
    <property type="match status" value="1"/>
</dbReference>
<dbReference type="InterPro" id="IPR001986">
    <property type="entry name" value="Enolpyruvate_Tfrase_dom"/>
</dbReference>
<dbReference type="InterPro" id="IPR036968">
    <property type="entry name" value="Enolpyruvate_Tfrase_sf"/>
</dbReference>
<dbReference type="InterPro" id="IPR050068">
    <property type="entry name" value="MurA_subfamily"/>
</dbReference>
<dbReference type="InterPro" id="IPR013792">
    <property type="entry name" value="RNA3'P_cycl/enolpyr_Trfase_a/b"/>
</dbReference>
<dbReference type="InterPro" id="IPR005750">
    <property type="entry name" value="UDP_GlcNAc_COvinyl_MurA"/>
</dbReference>
<dbReference type="NCBIfam" id="TIGR01072">
    <property type="entry name" value="murA"/>
    <property type="match status" value="1"/>
</dbReference>
<dbReference type="NCBIfam" id="NF006873">
    <property type="entry name" value="PRK09369.1"/>
    <property type="match status" value="1"/>
</dbReference>
<dbReference type="PANTHER" id="PTHR43783">
    <property type="entry name" value="UDP-N-ACETYLGLUCOSAMINE 1-CARBOXYVINYLTRANSFERASE"/>
    <property type="match status" value="1"/>
</dbReference>
<dbReference type="PANTHER" id="PTHR43783:SF1">
    <property type="entry name" value="UDP-N-ACETYLGLUCOSAMINE 1-CARBOXYVINYLTRANSFERASE"/>
    <property type="match status" value="1"/>
</dbReference>
<dbReference type="Pfam" id="PF00275">
    <property type="entry name" value="EPSP_synthase"/>
    <property type="match status" value="1"/>
</dbReference>
<dbReference type="SUPFAM" id="SSF55205">
    <property type="entry name" value="EPT/RTPC-like"/>
    <property type="match status" value="1"/>
</dbReference>
<gene>
    <name evidence="1" type="primary">murA</name>
    <name type="ordered locus">ESA_03582</name>
</gene>
<reference key="1">
    <citation type="journal article" date="2010" name="PLoS ONE">
        <title>Genome sequence of Cronobacter sakazakii BAA-894 and comparative genomic hybridization analysis with other Cronobacter species.</title>
        <authorList>
            <person name="Kucerova E."/>
            <person name="Clifton S.W."/>
            <person name="Xia X.Q."/>
            <person name="Long F."/>
            <person name="Porwollik S."/>
            <person name="Fulton L."/>
            <person name="Fronick C."/>
            <person name="Minx P."/>
            <person name="Kyung K."/>
            <person name="Warren W."/>
            <person name="Fulton R."/>
            <person name="Feng D."/>
            <person name="Wollam A."/>
            <person name="Shah N."/>
            <person name="Bhonagiri V."/>
            <person name="Nash W.E."/>
            <person name="Hallsworth-Pepin K."/>
            <person name="Wilson R.K."/>
            <person name="McClelland M."/>
            <person name="Forsythe S.J."/>
        </authorList>
    </citation>
    <scope>NUCLEOTIDE SEQUENCE [LARGE SCALE GENOMIC DNA]</scope>
    <source>
        <strain>ATCC BAA-894</strain>
    </source>
</reference>
<proteinExistence type="inferred from homology"/>
<feature type="chain" id="PRO_1000023036" description="UDP-N-acetylglucosamine 1-carboxyvinyltransferase">
    <location>
        <begin position="1"/>
        <end position="419"/>
    </location>
</feature>
<feature type="active site" description="Proton donor" evidence="1">
    <location>
        <position position="115"/>
    </location>
</feature>
<feature type="binding site" evidence="1">
    <location>
        <begin position="22"/>
        <end position="23"/>
    </location>
    <ligand>
        <name>phosphoenolpyruvate</name>
        <dbReference type="ChEBI" id="CHEBI:58702"/>
    </ligand>
</feature>
<feature type="binding site" evidence="1">
    <location>
        <position position="91"/>
    </location>
    <ligand>
        <name>UDP-N-acetyl-alpha-D-glucosamine</name>
        <dbReference type="ChEBI" id="CHEBI:57705"/>
    </ligand>
</feature>
<feature type="binding site" evidence="1">
    <location>
        <begin position="120"/>
        <end position="124"/>
    </location>
    <ligand>
        <name>UDP-N-acetyl-alpha-D-glucosamine</name>
        <dbReference type="ChEBI" id="CHEBI:57705"/>
    </ligand>
</feature>
<feature type="binding site" evidence="1">
    <location>
        <begin position="160"/>
        <end position="163"/>
    </location>
    <ligand>
        <name>UDP-N-acetyl-alpha-D-glucosamine</name>
        <dbReference type="ChEBI" id="CHEBI:57705"/>
    </ligand>
</feature>
<feature type="binding site" evidence="1">
    <location>
        <position position="305"/>
    </location>
    <ligand>
        <name>UDP-N-acetyl-alpha-D-glucosamine</name>
        <dbReference type="ChEBI" id="CHEBI:57705"/>
    </ligand>
</feature>
<feature type="binding site" evidence="1">
    <location>
        <position position="327"/>
    </location>
    <ligand>
        <name>UDP-N-acetyl-alpha-D-glucosamine</name>
        <dbReference type="ChEBI" id="CHEBI:57705"/>
    </ligand>
</feature>
<feature type="modified residue" description="2-(S-cysteinyl)pyruvic acid O-phosphothioketal" evidence="1">
    <location>
        <position position="115"/>
    </location>
</feature>
<keyword id="KW-0131">Cell cycle</keyword>
<keyword id="KW-0132">Cell division</keyword>
<keyword id="KW-0133">Cell shape</keyword>
<keyword id="KW-0961">Cell wall biogenesis/degradation</keyword>
<keyword id="KW-0963">Cytoplasm</keyword>
<keyword id="KW-0573">Peptidoglycan synthesis</keyword>
<keyword id="KW-0670">Pyruvate</keyword>
<keyword id="KW-1185">Reference proteome</keyword>
<keyword id="KW-0808">Transferase</keyword>
<name>MURA_CROS8</name>
<comment type="function">
    <text evidence="1">Cell wall formation. Adds enolpyruvyl to UDP-N-acetylglucosamine.</text>
</comment>
<comment type="catalytic activity">
    <reaction evidence="1">
        <text>phosphoenolpyruvate + UDP-N-acetyl-alpha-D-glucosamine = UDP-N-acetyl-3-O-(1-carboxyvinyl)-alpha-D-glucosamine + phosphate</text>
        <dbReference type="Rhea" id="RHEA:18681"/>
        <dbReference type="ChEBI" id="CHEBI:43474"/>
        <dbReference type="ChEBI" id="CHEBI:57705"/>
        <dbReference type="ChEBI" id="CHEBI:58702"/>
        <dbReference type="ChEBI" id="CHEBI:68483"/>
        <dbReference type="EC" id="2.5.1.7"/>
    </reaction>
</comment>
<comment type="pathway">
    <text evidence="1">Cell wall biogenesis; peptidoglycan biosynthesis.</text>
</comment>
<comment type="subcellular location">
    <subcellularLocation>
        <location evidence="1">Cytoplasm</location>
    </subcellularLocation>
</comment>
<comment type="similarity">
    <text evidence="1">Belongs to the EPSP synthase family. MurA subfamily.</text>
</comment>
<sequence>MDKFRVQGPGRLSGEVTISGAKNAALPILFAALLAEEPVEIQNVPKLKDIDTTMKLLSQLGTKVERNGSVWIDASQVNIFCAPYELVKTMRASIWALGPLVARFGQGQVSLPGGCAIGARPVDLHITGLEQLGAEIKLEEGYVKASVQGRLKGAHIVMDKVSVGATVTIMSAATLAEGTTVIENAAREPEIVDTANFLNTLGAKITGQGTDKITIEGVERLGGGVYRVLPDRIETGTFLVAAAISGGKVMCRNTRPDTLDAVLAKLREAGADIETGEDWISLDMHGKRPKAVNVRTAPHPAFPTDMQAQFTLLNLVAEGTGVITETIFENRFMHVPELIRMGAHAEIESNTVICHGVEKLSGAQVMATDLRASASLVLAGCIAEGTTVVDRIYHIDRGYEGIEDKLRALGANIERIKGE</sequence>
<organism>
    <name type="scientific">Cronobacter sakazakii (strain ATCC BAA-894)</name>
    <name type="common">Enterobacter sakazakii</name>
    <dbReference type="NCBI Taxonomy" id="290339"/>
    <lineage>
        <taxon>Bacteria</taxon>
        <taxon>Pseudomonadati</taxon>
        <taxon>Pseudomonadota</taxon>
        <taxon>Gammaproteobacteria</taxon>
        <taxon>Enterobacterales</taxon>
        <taxon>Enterobacteriaceae</taxon>
        <taxon>Cronobacter</taxon>
    </lineage>
</organism>
<accession>A7MNS2</accession>
<protein>
    <recommendedName>
        <fullName evidence="1">UDP-N-acetylglucosamine 1-carboxyvinyltransferase</fullName>
        <ecNumber evidence="1">2.5.1.7</ecNumber>
    </recommendedName>
    <alternativeName>
        <fullName evidence="1">Enoylpyruvate transferase</fullName>
    </alternativeName>
    <alternativeName>
        <fullName evidence="1">UDP-N-acetylglucosamine enolpyruvyl transferase</fullName>
        <shortName evidence="1">EPT</shortName>
    </alternativeName>
</protein>